<gene>
    <name type="primary">DNASE1</name>
</gene>
<organism>
    <name type="scientific">Equus caballus</name>
    <name type="common">Horse</name>
    <dbReference type="NCBI Taxonomy" id="9796"/>
    <lineage>
        <taxon>Eukaryota</taxon>
        <taxon>Metazoa</taxon>
        <taxon>Chordata</taxon>
        <taxon>Craniata</taxon>
        <taxon>Vertebrata</taxon>
        <taxon>Euteleostomi</taxon>
        <taxon>Mammalia</taxon>
        <taxon>Eutheria</taxon>
        <taxon>Laurasiatheria</taxon>
        <taxon>Perissodactyla</taxon>
        <taxon>Equidae</taxon>
        <taxon>Equus</taxon>
    </lineage>
</organism>
<name>DNAS1_HORSE</name>
<keyword id="KW-0009">Actin-binding</keyword>
<keyword id="KW-0053">Apoptosis</keyword>
<keyword id="KW-0106">Calcium</keyword>
<keyword id="KW-0968">Cytoplasmic vesicle</keyword>
<keyword id="KW-1015">Disulfide bond</keyword>
<keyword id="KW-0255">Endonuclease</keyword>
<keyword id="KW-0325">Glycoprotein</keyword>
<keyword id="KW-0378">Hydrolase</keyword>
<keyword id="KW-0540">Nuclease</keyword>
<keyword id="KW-0539">Nucleus</keyword>
<keyword id="KW-1185">Reference proteome</keyword>
<keyword id="KW-0964">Secreted</keyword>
<keyword id="KW-0732">Signal</keyword>
<sequence length="282" mass="31708">MRGARLTGALLALAGLLQVALSLRIAAFNIRTFGETKMSNDTLSNYIVQILNRYDIALIQEVRDSHLTAVGKLLDRLNQDDPNTYHFVVSEPLGRNNYKERYLFVFRPDQVSLLDSYQYNDGCEPCGNDTFSREPAIVKFSSPFTQVKEFAIVPLHAAPSDALAEIDSLYDVYLDVQQKWDMEDIMLMGDFNAGCSYVTSSQWPSIRLRRNPAFWWLIPDTADTTVKSTHCAYDRIVVAGTLLQEAVVPDSAVPFDFQAAYGLNDQTAEAISDHYPVEVTLM</sequence>
<feature type="signal peptide" evidence="1">
    <location>
        <begin position="1"/>
        <end position="22"/>
    </location>
</feature>
<feature type="chain" id="PRO_0000042587" description="Deoxyribonuclease-1">
    <location>
        <begin position="23"/>
        <end position="282"/>
    </location>
</feature>
<feature type="active site" evidence="1">
    <location>
        <position position="100"/>
    </location>
</feature>
<feature type="active site" evidence="1">
    <location>
        <position position="156"/>
    </location>
</feature>
<feature type="site" description="Involved in actin-binding" evidence="1">
    <location>
        <position position="35"/>
    </location>
</feature>
<feature type="site" description="Involved in actin-binding" evidence="1">
    <location>
        <position position="89"/>
    </location>
</feature>
<feature type="glycosylation site" description="N-linked (GlcNAc...) asparagine" evidence="5">
    <location>
        <position position="40"/>
    </location>
</feature>
<feature type="glycosylation site" description="N-linked (GlcNAc...) asparagine" evidence="5">
    <location>
        <position position="128"/>
    </location>
</feature>
<feature type="disulfide bond" evidence="1">
    <location>
        <begin position="123"/>
        <end position="126"/>
    </location>
</feature>
<feature type="disulfide bond" description="Essential for enzymatic activity" evidence="1">
    <location>
        <begin position="195"/>
        <end position="231"/>
    </location>
</feature>
<comment type="function">
    <text evidence="1 2 3 4">Serum endocuclease secreted into body fluids by a wide variety of exocrine and endocrine organs (By similarity). Expressed by non-hematopoietic tissues and preferentially cleaves protein-free DNA. Among other functions, seems to be involved in cell death by apoptosis. Binds specifically to G-actin and blocks actin polymerization (By similarity). Together with DNASE1L3, plays a key role in degrading neutrophil extracellular traps (NETs). NETs are mainly composed of DNA fibers and are released by neutrophils to bind pathogens during inflammation. Degradation of intravascular NETs by DNASE1 and DNASE1L3 is required to prevent formation of clots that obstruct blood vessels and cause organ damage following inflammation (By similarity).</text>
</comment>
<comment type="catalytic activity">
    <reaction evidence="3">
        <text>Endonucleolytic cleavage to 5'-phosphodinucleotide and 5'-phosphooligonucleotide end-products.</text>
        <dbReference type="EC" id="3.1.21.1"/>
    </reaction>
</comment>
<comment type="cofactor">
    <cofactor evidence="3">
        <name>Ca(2+)</name>
        <dbReference type="ChEBI" id="CHEBI:29108"/>
    </cofactor>
    <cofactor evidence="3">
        <name>Mg(2+)</name>
        <dbReference type="ChEBI" id="CHEBI:18420"/>
    </cofactor>
    <text evidence="3">Divalent metal cations. Prefers Ca(2+) or Mg(2+).</text>
</comment>
<comment type="subcellular location">
    <subcellularLocation>
        <location evidence="3">Secreted</location>
    </subcellularLocation>
    <subcellularLocation>
        <location evidence="3">Zymogen granule</location>
    </subcellularLocation>
    <subcellularLocation>
        <location evidence="3">Nucleus envelope</location>
    </subcellularLocation>
    <text evidence="3">Secretory protein, stored in zymogen granules and found in the nuclear envelope.</text>
</comment>
<comment type="similarity">
    <text evidence="6">Belongs to the DNase I family.</text>
</comment>
<evidence type="ECO:0000250" key="1">
    <source>
        <dbReference type="UniProtKB" id="P00639"/>
    </source>
</evidence>
<evidence type="ECO:0000250" key="2">
    <source>
        <dbReference type="UniProtKB" id="P21704"/>
    </source>
</evidence>
<evidence type="ECO:0000250" key="3">
    <source>
        <dbReference type="UniProtKB" id="P24855"/>
    </source>
</evidence>
<evidence type="ECO:0000250" key="4">
    <source>
        <dbReference type="UniProtKB" id="P49183"/>
    </source>
</evidence>
<evidence type="ECO:0000255" key="5"/>
<evidence type="ECO:0000305" key="6"/>
<dbReference type="EC" id="3.1.21.1" evidence="3"/>
<dbReference type="EMBL" id="AB162819">
    <property type="protein sequence ID" value="BAE19916.1"/>
    <property type="molecule type" value="mRNA"/>
</dbReference>
<dbReference type="RefSeq" id="NP_001075983.1">
    <property type="nucleotide sequence ID" value="NM_001082514.2"/>
</dbReference>
<dbReference type="SMR" id="Q4AEE3"/>
<dbReference type="FunCoup" id="Q4AEE3">
    <property type="interactions" value="249"/>
</dbReference>
<dbReference type="STRING" id="9796.ENSECAP00000006438"/>
<dbReference type="GlyCosmos" id="Q4AEE3">
    <property type="glycosylation" value="2 sites, No reported glycans"/>
</dbReference>
<dbReference type="PaxDb" id="9796-ENSECAP00000006438"/>
<dbReference type="PeptideAtlas" id="Q4AEE3"/>
<dbReference type="GeneID" id="100034219"/>
<dbReference type="KEGG" id="ecb:100034219"/>
<dbReference type="CTD" id="1773"/>
<dbReference type="InParanoid" id="Q4AEE3"/>
<dbReference type="OrthoDB" id="10061407at2759"/>
<dbReference type="BRENDA" id="3.1.21.1">
    <property type="organism ID" value="2120"/>
</dbReference>
<dbReference type="Proteomes" id="UP000002281">
    <property type="component" value="Unplaced"/>
</dbReference>
<dbReference type="GO" id="GO:0005576">
    <property type="term" value="C:extracellular region"/>
    <property type="evidence" value="ECO:0007669"/>
    <property type="project" value="UniProtKB-SubCell"/>
</dbReference>
<dbReference type="GO" id="GO:0005635">
    <property type="term" value="C:nuclear envelope"/>
    <property type="evidence" value="ECO:0007669"/>
    <property type="project" value="UniProtKB-SubCell"/>
</dbReference>
<dbReference type="GO" id="GO:0005634">
    <property type="term" value="C:nucleus"/>
    <property type="evidence" value="ECO:0000318"/>
    <property type="project" value="GO_Central"/>
</dbReference>
<dbReference type="GO" id="GO:0042588">
    <property type="term" value="C:zymogen granule"/>
    <property type="evidence" value="ECO:0007669"/>
    <property type="project" value="UniProtKB-SubCell"/>
</dbReference>
<dbReference type="GO" id="GO:0003779">
    <property type="term" value="F:actin binding"/>
    <property type="evidence" value="ECO:0007669"/>
    <property type="project" value="UniProtKB-KW"/>
</dbReference>
<dbReference type="GO" id="GO:0004530">
    <property type="term" value="F:deoxyribonuclease I activity"/>
    <property type="evidence" value="ECO:0000318"/>
    <property type="project" value="GO_Central"/>
</dbReference>
<dbReference type="GO" id="GO:0003677">
    <property type="term" value="F:DNA binding"/>
    <property type="evidence" value="ECO:0000318"/>
    <property type="project" value="GO_Central"/>
</dbReference>
<dbReference type="GO" id="GO:0006915">
    <property type="term" value="P:apoptotic process"/>
    <property type="evidence" value="ECO:0007669"/>
    <property type="project" value="UniProtKB-KW"/>
</dbReference>
<dbReference type="GO" id="GO:0006308">
    <property type="term" value="P:DNA catabolic process"/>
    <property type="evidence" value="ECO:0000250"/>
    <property type="project" value="UniProtKB"/>
</dbReference>
<dbReference type="GO" id="GO:0002283">
    <property type="term" value="P:neutrophil activation involved in immune response"/>
    <property type="evidence" value="ECO:0000250"/>
    <property type="project" value="UniProtKB"/>
</dbReference>
<dbReference type="GO" id="GO:0002673">
    <property type="term" value="P:regulation of acute inflammatory response"/>
    <property type="evidence" value="ECO:0000250"/>
    <property type="project" value="UniProtKB"/>
</dbReference>
<dbReference type="GO" id="GO:0070948">
    <property type="term" value="P:regulation of neutrophil mediated cytotoxicity"/>
    <property type="evidence" value="ECO:0000250"/>
    <property type="project" value="UniProtKB"/>
</dbReference>
<dbReference type="CDD" id="cd10282">
    <property type="entry name" value="DNase1"/>
    <property type="match status" value="1"/>
</dbReference>
<dbReference type="FunFam" id="3.60.10.10:FF:000035">
    <property type="entry name" value="Deoxyribonuclease"/>
    <property type="match status" value="1"/>
</dbReference>
<dbReference type="Gene3D" id="3.60.10.10">
    <property type="entry name" value="Endonuclease/exonuclease/phosphatase"/>
    <property type="match status" value="1"/>
</dbReference>
<dbReference type="InterPro" id="IPR018057">
    <property type="entry name" value="Deoxyribonuclease-1_AS"/>
</dbReference>
<dbReference type="InterPro" id="IPR016202">
    <property type="entry name" value="DNase_I"/>
</dbReference>
<dbReference type="InterPro" id="IPR033125">
    <property type="entry name" value="DNASE_I_2"/>
</dbReference>
<dbReference type="InterPro" id="IPR036691">
    <property type="entry name" value="Endo/exonu/phosph_ase_sf"/>
</dbReference>
<dbReference type="InterPro" id="IPR005135">
    <property type="entry name" value="Endo/exonuclease/phosphatase"/>
</dbReference>
<dbReference type="PANTHER" id="PTHR11371">
    <property type="entry name" value="DEOXYRIBONUCLEASE"/>
    <property type="match status" value="1"/>
</dbReference>
<dbReference type="PANTHER" id="PTHR11371:SF27">
    <property type="entry name" value="DEOXYRIBONUCLEASE-1"/>
    <property type="match status" value="1"/>
</dbReference>
<dbReference type="Pfam" id="PF03372">
    <property type="entry name" value="Exo_endo_phos"/>
    <property type="match status" value="1"/>
</dbReference>
<dbReference type="PIRSF" id="PIRSF000988">
    <property type="entry name" value="DNase_I_euk"/>
    <property type="match status" value="1"/>
</dbReference>
<dbReference type="PRINTS" id="PR00130">
    <property type="entry name" value="DNASEI"/>
</dbReference>
<dbReference type="SMART" id="SM00476">
    <property type="entry name" value="DNaseIc"/>
    <property type="match status" value="1"/>
</dbReference>
<dbReference type="SUPFAM" id="SSF56219">
    <property type="entry name" value="DNase I-like"/>
    <property type="match status" value="1"/>
</dbReference>
<dbReference type="PROSITE" id="PS00919">
    <property type="entry name" value="DNASE_I_1"/>
    <property type="match status" value="1"/>
</dbReference>
<dbReference type="PROSITE" id="PS00918">
    <property type="entry name" value="DNASE_I_2"/>
    <property type="match status" value="1"/>
</dbReference>
<protein>
    <recommendedName>
        <fullName>Deoxyribonuclease-1</fullName>
        <ecNumber evidence="3">3.1.21.1</ecNumber>
    </recommendedName>
    <alternativeName>
        <fullName>Deoxyribonuclease I</fullName>
        <shortName>DNase I</shortName>
    </alternativeName>
</protein>
<reference key="1">
    <citation type="submission" date="2004-02" db="EMBL/GenBank/DDBJ databases">
        <title>Cloning of cDNA encoding horse parotid deoxyribonuclease I.</title>
        <authorList>
            <person name="Yasuda T."/>
        </authorList>
    </citation>
    <scope>NUCLEOTIDE SEQUENCE [MRNA]</scope>
    <source>
        <tissue>Parotid gland</tissue>
    </source>
</reference>
<accession>Q4AEE3</accession>
<proteinExistence type="evidence at transcript level"/>